<comment type="function">
    <text evidence="1">Involved in base excision repair of DNA damaged by oxidation or by mutagenic agents. Acts as a DNA glycosylase that recognizes and removes damaged bases. Has a preference for oxidized purines, such as 7,8-dihydro-8-oxoguanine (8-oxoG). Has AP (apurinic/apyrimidinic) lyase activity and introduces nicks in the DNA strand. Cleaves the DNA backbone by beta-delta elimination to generate a single-strand break at the site of the removed base with both 3'- and 5'-phosphates (By similarity).</text>
</comment>
<comment type="catalytic activity">
    <reaction>
        <text>Hydrolysis of DNA containing ring-opened 7-methylguanine residues, releasing 2,6-diamino-4-hydroxy-5-(N-methyl)formamidopyrimidine.</text>
        <dbReference type="EC" id="3.2.2.23"/>
    </reaction>
</comment>
<comment type="catalytic activity">
    <reaction>
        <text>2'-deoxyribonucleotide-(2'-deoxyribose 5'-phosphate)-2'-deoxyribonucleotide-DNA = a 3'-end 2'-deoxyribonucleotide-(2,3-dehydro-2,3-deoxyribose 5'-phosphate)-DNA + a 5'-end 5'-phospho-2'-deoxyribonucleoside-DNA + H(+)</text>
        <dbReference type="Rhea" id="RHEA:66592"/>
        <dbReference type="Rhea" id="RHEA-COMP:13180"/>
        <dbReference type="Rhea" id="RHEA-COMP:16897"/>
        <dbReference type="Rhea" id="RHEA-COMP:17067"/>
        <dbReference type="ChEBI" id="CHEBI:15378"/>
        <dbReference type="ChEBI" id="CHEBI:136412"/>
        <dbReference type="ChEBI" id="CHEBI:157695"/>
        <dbReference type="ChEBI" id="CHEBI:167181"/>
        <dbReference type="EC" id="4.2.99.18"/>
    </reaction>
</comment>
<comment type="cofactor">
    <cofactor evidence="1">
        <name>Zn(2+)</name>
        <dbReference type="ChEBI" id="CHEBI:29105"/>
    </cofactor>
    <text evidence="1">Binds 1 zinc ion per subunit.</text>
</comment>
<comment type="subunit">
    <text evidence="1">Monomer.</text>
</comment>
<comment type="similarity">
    <text evidence="2">Belongs to the FPG family.</text>
</comment>
<gene>
    <name type="primary">mutM</name>
    <name type="synonym">fpg</name>
</gene>
<protein>
    <recommendedName>
        <fullName>Formamidopyrimidine-DNA glycosylase</fullName>
        <shortName>Fapy-DNA glycosylase</shortName>
        <ecNumber>3.2.2.23</ecNumber>
    </recommendedName>
    <alternativeName>
        <fullName>DNA-(apurinic or apyrimidinic site) lyase MutM</fullName>
        <shortName>AP lyase MutM</shortName>
        <ecNumber>4.2.99.18</ecNumber>
    </alternativeName>
</protein>
<proteinExistence type="inferred from homology"/>
<dbReference type="EC" id="3.2.2.23"/>
<dbReference type="EC" id="4.2.99.18"/>
<dbReference type="EMBL" id="Y10290">
    <property type="protein sequence ID" value="CAA71333.1"/>
    <property type="molecule type" value="Genomic_DNA"/>
</dbReference>
<dbReference type="SMR" id="P95744"/>
<dbReference type="GO" id="GO:0034039">
    <property type="term" value="F:8-oxo-7,8-dihydroguanine DNA N-glycosylase activity"/>
    <property type="evidence" value="ECO:0007669"/>
    <property type="project" value="TreeGrafter"/>
</dbReference>
<dbReference type="GO" id="GO:0140078">
    <property type="term" value="F:class I DNA-(apurinic or apyrimidinic site) endonuclease activity"/>
    <property type="evidence" value="ECO:0007669"/>
    <property type="project" value="UniProtKB-EC"/>
</dbReference>
<dbReference type="GO" id="GO:0003684">
    <property type="term" value="F:damaged DNA binding"/>
    <property type="evidence" value="ECO:0007669"/>
    <property type="project" value="InterPro"/>
</dbReference>
<dbReference type="GO" id="GO:0008270">
    <property type="term" value="F:zinc ion binding"/>
    <property type="evidence" value="ECO:0007669"/>
    <property type="project" value="UniProtKB-UniRule"/>
</dbReference>
<dbReference type="GO" id="GO:0006284">
    <property type="term" value="P:base-excision repair"/>
    <property type="evidence" value="ECO:0007669"/>
    <property type="project" value="InterPro"/>
</dbReference>
<dbReference type="CDD" id="cd08966">
    <property type="entry name" value="EcFpg-like_N"/>
    <property type="match status" value="1"/>
</dbReference>
<dbReference type="FunFam" id="1.10.8.50:FF:000003">
    <property type="entry name" value="Formamidopyrimidine-DNA glycosylase"/>
    <property type="match status" value="1"/>
</dbReference>
<dbReference type="Gene3D" id="1.10.8.50">
    <property type="match status" value="1"/>
</dbReference>
<dbReference type="Gene3D" id="3.20.190.10">
    <property type="entry name" value="MutM-like, N-terminal"/>
    <property type="match status" value="1"/>
</dbReference>
<dbReference type="HAMAP" id="MF_00103">
    <property type="entry name" value="Fapy_DNA_glycosyl"/>
    <property type="match status" value="1"/>
</dbReference>
<dbReference type="InterPro" id="IPR015886">
    <property type="entry name" value="DNA_glyclase/AP_lyase_DNA-bd"/>
</dbReference>
<dbReference type="InterPro" id="IPR015887">
    <property type="entry name" value="DNA_glyclase_Znf_dom_DNA_BS"/>
</dbReference>
<dbReference type="InterPro" id="IPR020629">
    <property type="entry name" value="Formamido-pyr_DNA_Glyclase"/>
</dbReference>
<dbReference type="InterPro" id="IPR012319">
    <property type="entry name" value="FPG_cat"/>
</dbReference>
<dbReference type="InterPro" id="IPR035937">
    <property type="entry name" value="MutM-like_N-ter"/>
</dbReference>
<dbReference type="InterPro" id="IPR010979">
    <property type="entry name" value="Ribosomal_uS13-like_H2TH"/>
</dbReference>
<dbReference type="InterPro" id="IPR000214">
    <property type="entry name" value="Znf_DNA_glyclase/AP_lyase"/>
</dbReference>
<dbReference type="InterPro" id="IPR010663">
    <property type="entry name" value="Znf_FPG/IleRS"/>
</dbReference>
<dbReference type="NCBIfam" id="TIGR00577">
    <property type="entry name" value="fpg"/>
    <property type="match status" value="1"/>
</dbReference>
<dbReference type="NCBIfam" id="NF002211">
    <property type="entry name" value="PRK01103.1"/>
    <property type="match status" value="1"/>
</dbReference>
<dbReference type="NCBIfam" id="NF010551">
    <property type="entry name" value="PRK13945.1"/>
    <property type="match status" value="1"/>
</dbReference>
<dbReference type="PANTHER" id="PTHR22993">
    <property type="entry name" value="FORMAMIDOPYRIMIDINE-DNA GLYCOSYLASE"/>
    <property type="match status" value="1"/>
</dbReference>
<dbReference type="PANTHER" id="PTHR22993:SF9">
    <property type="entry name" value="FORMAMIDOPYRIMIDINE-DNA GLYCOSYLASE"/>
    <property type="match status" value="1"/>
</dbReference>
<dbReference type="Pfam" id="PF01149">
    <property type="entry name" value="Fapy_DNA_glyco"/>
    <property type="match status" value="1"/>
</dbReference>
<dbReference type="Pfam" id="PF06831">
    <property type="entry name" value="H2TH"/>
    <property type="match status" value="1"/>
</dbReference>
<dbReference type="Pfam" id="PF06827">
    <property type="entry name" value="zf-FPG_IleRS"/>
    <property type="match status" value="1"/>
</dbReference>
<dbReference type="SMART" id="SM00898">
    <property type="entry name" value="Fapy_DNA_glyco"/>
    <property type="match status" value="1"/>
</dbReference>
<dbReference type="SMART" id="SM01232">
    <property type="entry name" value="H2TH"/>
    <property type="match status" value="1"/>
</dbReference>
<dbReference type="SUPFAM" id="SSF57716">
    <property type="entry name" value="Glucocorticoid receptor-like (DNA-binding domain)"/>
    <property type="match status" value="1"/>
</dbReference>
<dbReference type="SUPFAM" id="SSF81624">
    <property type="entry name" value="N-terminal domain of MutM-like DNA repair proteins"/>
    <property type="match status" value="1"/>
</dbReference>
<dbReference type="SUPFAM" id="SSF46946">
    <property type="entry name" value="S13-like H2TH domain"/>
    <property type="match status" value="1"/>
</dbReference>
<dbReference type="PROSITE" id="PS51068">
    <property type="entry name" value="FPG_CAT"/>
    <property type="match status" value="1"/>
</dbReference>
<dbReference type="PROSITE" id="PS01242">
    <property type="entry name" value="ZF_FPG_1"/>
    <property type="match status" value="1"/>
</dbReference>
<dbReference type="PROSITE" id="PS51066">
    <property type="entry name" value="ZF_FPG_2"/>
    <property type="match status" value="1"/>
</dbReference>
<accession>P95744</accession>
<organism>
    <name type="scientific">Synechococcus elongatus</name>
    <dbReference type="NCBI Taxonomy" id="32046"/>
    <lineage>
        <taxon>Bacteria</taxon>
        <taxon>Bacillati</taxon>
        <taxon>Cyanobacteriota</taxon>
        <taxon>Cyanophyceae</taxon>
        <taxon>Synechococcales</taxon>
        <taxon>Synechococcaceae</taxon>
        <taxon>Synechococcus</taxon>
    </lineage>
</organism>
<reference key="1">
    <citation type="journal article" date="1997" name="Photosyn. Res.">
        <title>Molecular characterization and overexpression of the petF gene from Synechococcus elongatus: evidence for a second site of electrostatic interaction between ferredoxin and the PSI-D subunit.</title>
        <authorList>
            <person name="Floss B."/>
            <person name="Igloi G."/>
            <person name="Cassier-Chauvat C."/>
            <person name="Muehlenhoff U."/>
        </authorList>
    </citation>
    <scope>NUCLEOTIDE SEQUENCE [GENOMIC DNA]</scope>
</reference>
<keyword id="KW-0227">DNA damage</keyword>
<keyword id="KW-0234">DNA repair</keyword>
<keyword id="KW-0238">DNA-binding</keyword>
<keyword id="KW-0326">Glycosidase</keyword>
<keyword id="KW-0378">Hydrolase</keyword>
<keyword id="KW-0456">Lyase</keyword>
<keyword id="KW-0479">Metal-binding</keyword>
<keyword id="KW-0511">Multifunctional enzyme</keyword>
<keyword id="KW-0862">Zinc</keyword>
<keyword id="KW-0863">Zinc-finger</keyword>
<feature type="initiator methionine" description="Removed" evidence="1">
    <location>
        <position position="1"/>
    </location>
</feature>
<feature type="chain" id="PRO_0000170876" description="Formamidopyrimidine-DNA glycosylase">
    <location>
        <begin position="2"/>
        <end position="284"/>
    </location>
</feature>
<feature type="zinc finger region" description="FPG-type">
    <location>
        <begin position="243"/>
        <end position="277"/>
    </location>
</feature>
<feature type="active site" description="Schiff-base intermediate with DNA" evidence="1">
    <location>
        <position position="2"/>
    </location>
</feature>
<feature type="active site" description="Proton donor" evidence="1">
    <location>
        <position position="3"/>
    </location>
</feature>
<feature type="active site" description="Proton donor; for beta-elimination activity" evidence="1">
    <location>
        <position position="60"/>
    </location>
</feature>
<feature type="active site" description="Proton donor; for delta-elimination activity" evidence="1">
    <location>
        <position position="267"/>
    </location>
</feature>
<feature type="binding site" evidence="1">
    <location>
        <position position="94"/>
    </location>
    <ligand>
        <name>DNA</name>
        <dbReference type="ChEBI" id="CHEBI:16991"/>
    </ligand>
</feature>
<feature type="binding site" evidence="1">
    <location>
        <position position="113"/>
    </location>
    <ligand>
        <name>DNA</name>
        <dbReference type="ChEBI" id="CHEBI:16991"/>
    </ligand>
</feature>
<evidence type="ECO:0000250" key="1"/>
<evidence type="ECO:0000305" key="2"/>
<name>FPG_SYNEL</name>
<sequence length="284" mass="31716">MPELPEVETVRRGLELVTLKQPIVDVEVLLARSIALPKEPQAFIEHLRDRRIEQWQRRGKYLLATLDDGSRLVIHLRMSGQLLWLTTPQPPCPHTRVRWFFPTRAELRFVDQRTFGRCWWLPPDCRVAEAIPALATLAPEPLSEAFTVAFLAARLAHCRRSIKTALLDQSIVAGMGNIYADESLFLSGLHPTQSAHTLTPEQVQRLHGVICQVLREGIAAGGTTIRTFMSPAGVNGHYGGQAWVYGRKGEACRVCGTTIERLRLAGRSSHYCPQCQPLSSAIGK</sequence>